<sequence>MEAALKKLNIALQEAIDSFEGPLNQERLNELQTTESLPNKEVWSLASQTIDLADKIIHRLQPPSLQLAESFLAYLDTKCLWAAVSHDIPDLITAGGPQTVQELAKKSGLQSIRLKQVMRVLHNNGIFEYKPTTQKYSNTPSSTLLAKDHWTQWHLWVDLYGNEHYKAAEGIPDAIREGQTRCAAQIQYDTDESMFRYFARNGLQEKFHKTLGAGAVAQAPGMMADYNWGELDDAVVLDIGGGGGDFITSLLREHPSMRGGLFELDSVIEMVRPKYRDASGEFADVGDRMVDLHVGDFRVEVPAYEVYTMKWCLHNWLDEDVVKILSAVRRAIKVTPRARMVVVESVLKDGRSSRIWRFGDLTMMAGANGQEREEEDWRGLAAKTGWNIHSISPLRNAWAAAIDLRPC</sequence>
<accession>A0A1U9YI02</accession>
<name>VERM_CLORO</name>
<organism>
    <name type="scientific">Clonostachys rogersoniana</name>
    <dbReference type="NCBI Taxonomy" id="122658"/>
    <lineage>
        <taxon>Eukaryota</taxon>
        <taxon>Fungi</taxon>
        <taxon>Dikarya</taxon>
        <taxon>Ascomycota</taxon>
        <taxon>Pezizomycotina</taxon>
        <taxon>Sordariomycetes</taxon>
        <taxon>Hypocreomycetidae</taxon>
        <taxon>Hypocreales</taxon>
        <taxon>Bionectriaceae</taxon>
        <taxon>Clonostachys</taxon>
    </lineage>
</organism>
<comment type="function">
    <text evidence="3 6">O-methyltransferase; part of the gene cluster that mediates the biosynthesis of 11'-deoxyverticillin A, one of the dimeric epipolythiodioxopiperazines (ETPs) from the verticillin family that act as mycotoxins (PubMed:28376389). 11'-deoxyverticillin A is required for normal conidiation (PubMed:28376389). The nonribosomal peptide synthetase verP is speculated to be responsible for condensation of amino acids to form the carbon skeleton of verticillin, whereas the cluster-specific tailoring enzymes are involved in further modifications leading to the production of 11'-deoxyverticillin A (Probable).</text>
</comment>
<comment type="pathway">
    <text evidence="3">Mycotoxin biosynthesis.</text>
</comment>
<comment type="induction">
    <text evidence="4">Expression is regulated by the cluster-specific regulator verZ.</text>
</comment>
<comment type="disruption phenotype">
    <text evidence="3">Completely abolishes the 11'-deoxyverticillin A production.</text>
</comment>
<comment type="similarity">
    <text evidence="2">Belongs to the class I-like SAM-binding methyltransferase superfamily. Cation-independent O-methyltransferase family.</text>
</comment>
<dbReference type="EC" id="2.1.1.-" evidence="1"/>
<dbReference type="EMBL" id="KY359203">
    <property type="protein sequence ID" value="AQZ42159.1"/>
    <property type="molecule type" value="Genomic_DNA"/>
</dbReference>
<dbReference type="SMR" id="A0A1U9YI02"/>
<dbReference type="GO" id="GO:0008171">
    <property type="term" value="F:O-methyltransferase activity"/>
    <property type="evidence" value="ECO:0007669"/>
    <property type="project" value="InterPro"/>
</dbReference>
<dbReference type="GO" id="GO:0046983">
    <property type="term" value="F:protein dimerization activity"/>
    <property type="evidence" value="ECO:0007669"/>
    <property type="project" value="InterPro"/>
</dbReference>
<dbReference type="GO" id="GO:0032259">
    <property type="term" value="P:methylation"/>
    <property type="evidence" value="ECO:0007669"/>
    <property type="project" value="UniProtKB-KW"/>
</dbReference>
<dbReference type="GO" id="GO:0044550">
    <property type="term" value="P:secondary metabolite biosynthetic process"/>
    <property type="evidence" value="ECO:0007669"/>
    <property type="project" value="UniProtKB-ARBA"/>
</dbReference>
<dbReference type="Gene3D" id="3.40.50.150">
    <property type="entry name" value="Vaccinia Virus protein VP39"/>
    <property type="match status" value="1"/>
</dbReference>
<dbReference type="Gene3D" id="1.10.10.10">
    <property type="entry name" value="Winged helix-like DNA-binding domain superfamily/Winged helix DNA-binding domain"/>
    <property type="match status" value="1"/>
</dbReference>
<dbReference type="InterPro" id="IPR016461">
    <property type="entry name" value="COMT-like"/>
</dbReference>
<dbReference type="InterPro" id="IPR001077">
    <property type="entry name" value="O_MeTrfase_dom"/>
</dbReference>
<dbReference type="InterPro" id="IPR012967">
    <property type="entry name" value="Plant_O-MeTrfase_dimerisation"/>
</dbReference>
<dbReference type="InterPro" id="IPR029063">
    <property type="entry name" value="SAM-dependent_MTases_sf"/>
</dbReference>
<dbReference type="InterPro" id="IPR036388">
    <property type="entry name" value="WH-like_DNA-bd_sf"/>
</dbReference>
<dbReference type="InterPro" id="IPR036390">
    <property type="entry name" value="WH_DNA-bd_sf"/>
</dbReference>
<dbReference type="PANTHER" id="PTHR43712:SF2">
    <property type="entry name" value="O-METHYLTRANSFERASE CICE"/>
    <property type="match status" value="1"/>
</dbReference>
<dbReference type="PANTHER" id="PTHR43712">
    <property type="entry name" value="PUTATIVE (AFU_ORTHOLOGUE AFUA_4G14580)-RELATED"/>
    <property type="match status" value="1"/>
</dbReference>
<dbReference type="Pfam" id="PF08100">
    <property type="entry name" value="Dimerisation"/>
    <property type="match status" value="1"/>
</dbReference>
<dbReference type="Pfam" id="PF00891">
    <property type="entry name" value="Methyltransf_2"/>
    <property type="match status" value="1"/>
</dbReference>
<dbReference type="PIRSF" id="PIRSF005739">
    <property type="entry name" value="O-mtase"/>
    <property type="match status" value="1"/>
</dbReference>
<dbReference type="SUPFAM" id="SSF53335">
    <property type="entry name" value="S-adenosyl-L-methionine-dependent methyltransferases"/>
    <property type="match status" value="1"/>
</dbReference>
<dbReference type="SUPFAM" id="SSF46785">
    <property type="entry name" value="Winged helix' DNA-binding domain"/>
    <property type="match status" value="1"/>
</dbReference>
<dbReference type="PROSITE" id="PS51683">
    <property type="entry name" value="SAM_OMT_II"/>
    <property type="match status" value="1"/>
</dbReference>
<feature type="chain" id="PRO_0000450167" description="O-methyltransferase verK">
    <location>
        <begin position="1"/>
        <end position="407"/>
    </location>
</feature>
<feature type="active site" description="Proton acceptor" evidence="2">
    <location>
        <position position="314"/>
    </location>
</feature>
<feature type="binding site" evidence="2">
    <location>
        <position position="263"/>
    </location>
    <ligand>
        <name>S-adenosyl-L-methionine</name>
        <dbReference type="ChEBI" id="CHEBI:59789"/>
    </ligand>
</feature>
<feature type="binding site" evidence="2">
    <location>
        <begin position="295"/>
        <end position="297"/>
    </location>
    <ligand>
        <name>S-adenosyl-L-methionine</name>
        <dbReference type="ChEBI" id="CHEBI:59789"/>
    </ligand>
</feature>
<reference key="1">
    <citation type="journal article" date="2017" name="Fungal Genet. Biol.">
        <title>Identification and characterization of the verticillin biosynthetic gene cluster in Clonostachys rogersoniana.</title>
        <authorList>
            <person name="Wang Y."/>
            <person name="Hu P."/>
            <person name="Pan Y."/>
            <person name="Zhu Y."/>
            <person name="Liu X."/>
            <person name="Che Y."/>
            <person name="Liu G."/>
        </authorList>
    </citation>
    <scope>NUCLEOTIDE SEQUENCE [GENOMIC DNA]</scope>
    <scope>FUNCTION</scope>
    <scope>DISRUPTION PHENOTYPE</scope>
    <scope>PATHWAY</scope>
    <source>
        <strain>XZC04-CC-302</strain>
    </source>
</reference>
<reference key="2">
    <citation type="journal article" date="2017" name="Microbiology">
        <title>VerZ, a Zn(II)2Cys6 DNA-binding protein, regulates the biosynthesis of verticillin in Clonostachys rogersoniana.</title>
        <authorList>
            <person name="Guo Z."/>
            <person name="Hao T."/>
            <person name="Wang Y."/>
            <person name="Pan Y."/>
            <person name="Ren F."/>
            <person name="Liu X."/>
            <person name="Che Y."/>
            <person name="Liu G."/>
        </authorList>
    </citation>
    <scope>INDUCTION</scope>
</reference>
<protein>
    <recommendedName>
        <fullName evidence="1">O-methyltransferase verK</fullName>
        <ecNumber evidence="1">2.1.1.-</ecNumber>
    </recommendedName>
    <alternativeName>
        <fullName evidence="5">Verticillin biosynthesis cluster protein M</fullName>
    </alternativeName>
</protein>
<gene>
    <name evidence="5" type="primary">verM</name>
</gene>
<evidence type="ECO:0000250" key="1">
    <source>
        <dbReference type="UniProtKB" id="Q4WMJ5"/>
    </source>
</evidence>
<evidence type="ECO:0000255" key="2">
    <source>
        <dbReference type="PROSITE-ProRule" id="PRU01020"/>
    </source>
</evidence>
<evidence type="ECO:0000269" key="3">
    <source>
    </source>
</evidence>
<evidence type="ECO:0000269" key="4">
    <source>
    </source>
</evidence>
<evidence type="ECO:0000303" key="5">
    <source>
    </source>
</evidence>
<evidence type="ECO:0000305" key="6">
    <source>
    </source>
</evidence>
<keyword id="KW-0489">Methyltransferase</keyword>
<keyword id="KW-0949">S-adenosyl-L-methionine</keyword>
<keyword id="KW-0808">Transferase</keyword>
<proteinExistence type="evidence at transcript level"/>